<reference key="1">
    <citation type="journal article" date="2005" name="Science">
        <title>The transcriptional landscape of the mammalian genome.</title>
        <authorList>
            <person name="Carninci P."/>
            <person name="Kasukawa T."/>
            <person name="Katayama S."/>
            <person name="Gough J."/>
            <person name="Frith M.C."/>
            <person name="Maeda N."/>
            <person name="Oyama R."/>
            <person name="Ravasi T."/>
            <person name="Lenhard B."/>
            <person name="Wells C."/>
            <person name="Kodzius R."/>
            <person name="Shimokawa K."/>
            <person name="Bajic V.B."/>
            <person name="Brenner S.E."/>
            <person name="Batalov S."/>
            <person name="Forrest A.R."/>
            <person name="Zavolan M."/>
            <person name="Davis M.J."/>
            <person name="Wilming L.G."/>
            <person name="Aidinis V."/>
            <person name="Allen J.E."/>
            <person name="Ambesi-Impiombato A."/>
            <person name="Apweiler R."/>
            <person name="Aturaliya R.N."/>
            <person name="Bailey T.L."/>
            <person name="Bansal M."/>
            <person name="Baxter L."/>
            <person name="Beisel K.W."/>
            <person name="Bersano T."/>
            <person name="Bono H."/>
            <person name="Chalk A.M."/>
            <person name="Chiu K.P."/>
            <person name="Choudhary V."/>
            <person name="Christoffels A."/>
            <person name="Clutterbuck D.R."/>
            <person name="Crowe M.L."/>
            <person name="Dalla E."/>
            <person name="Dalrymple B.P."/>
            <person name="de Bono B."/>
            <person name="Della Gatta G."/>
            <person name="di Bernardo D."/>
            <person name="Down T."/>
            <person name="Engstrom P."/>
            <person name="Fagiolini M."/>
            <person name="Faulkner G."/>
            <person name="Fletcher C.F."/>
            <person name="Fukushima T."/>
            <person name="Furuno M."/>
            <person name="Futaki S."/>
            <person name="Gariboldi M."/>
            <person name="Georgii-Hemming P."/>
            <person name="Gingeras T.R."/>
            <person name="Gojobori T."/>
            <person name="Green R.E."/>
            <person name="Gustincich S."/>
            <person name="Harbers M."/>
            <person name="Hayashi Y."/>
            <person name="Hensch T.K."/>
            <person name="Hirokawa N."/>
            <person name="Hill D."/>
            <person name="Huminiecki L."/>
            <person name="Iacono M."/>
            <person name="Ikeo K."/>
            <person name="Iwama A."/>
            <person name="Ishikawa T."/>
            <person name="Jakt M."/>
            <person name="Kanapin A."/>
            <person name="Katoh M."/>
            <person name="Kawasawa Y."/>
            <person name="Kelso J."/>
            <person name="Kitamura H."/>
            <person name="Kitano H."/>
            <person name="Kollias G."/>
            <person name="Krishnan S.P."/>
            <person name="Kruger A."/>
            <person name="Kummerfeld S.K."/>
            <person name="Kurochkin I.V."/>
            <person name="Lareau L.F."/>
            <person name="Lazarevic D."/>
            <person name="Lipovich L."/>
            <person name="Liu J."/>
            <person name="Liuni S."/>
            <person name="McWilliam S."/>
            <person name="Madan Babu M."/>
            <person name="Madera M."/>
            <person name="Marchionni L."/>
            <person name="Matsuda H."/>
            <person name="Matsuzawa S."/>
            <person name="Miki H."/>
            <person name="Mignone F."/>
            <person name="Miyake S."/>
            <person name="Morris K."/>
            <person name="Mottagui-Tabar S."/>
            <person name="Mulder N."/>
            <person name="Nakano N."/>
            <person name="Nakauchi H."/>
            <person name="Ng P."/>
            <person name="Nilsson R."/>
            <person name="Nishiguchi S."/>
            <person name="Nishikawa S."/>
            <person name="Nori F."/>
            <person name="Ohara O."/>
            <person name="Okazaki Y."/>
            <person name="Orlando V."/>
            <person name="Pang K.C."/>
            <person name="Pavan W.J."/>
            <person name="Pavesi G."/>
            <person name="Pesole G."/>
            <person name="Petrovsky N."/>
            <person name="Piazza S."/>
            <person name="Reed J."/>
            <person name="Reid J.F."/>
            <person name="Ring B.Z."/>
            <person name="Ringwald M."/>
            <person name="Rost B."/>
            <person name="Ruan Y."/>
            <person name="Salzberg S.L."/>
            <person name="Sandelin A."/>
            <person name="Schneider C."/>
            <person name="Schoenbach C."/>
            <person name="Sekiguchi K."/>
            <person name="Semple C.A."/>
            <person name="Seno S."/>
            <person name="Sessa L."/>
            <person name="Sheng Y."/>
            <person name="Shibata Y."/>
            <person name="Shimada H."/>
            <person name="Shimada K."/>
            <person name="Silva D."/>
            <person name="Sinclair B."/>
            <person name="Sperling S."/>
            <person name="Stupka E."/>
            <person name="Sugiura K."/>
            <person name="Sultana R."/>
            <person name="Takenaka Y."/>
            <person name="Taki K."/>
            <person name="Tammoja K."/>
            <person name="Tan S.L."/>
            <person name="Tang S."/>
            <person name="Taylor M.S."/>
            <person name="Tegner J."/>
            <person name="Teichmann S.A."/>
            <person name="Ueda H.R."/>
            <person name="van Nimwegen E."/>
            <person name="Verardo R."/>
            <person name="Wei C.L."/>
            <person name="Yagi K."/>
            <person name="Yamanishi H."/>
            <person name="Zabarovsky E."/>
            <person name="Zhu S."/>
            <person name="Zimmer A."/>
            <person name="Hide W."/>
            <person name="Bult C."/>
            <person name="Grimmond S.M."/>
            <person name="Teasdale R.D."/>
            <person name="Liu E.T."/>
            <person name="Brusic V."/>
            <person name="Quackenbush J."/>
            <person name="Wahlestedt C."/>
            <person name="Mattick J.S."/>
            <person name="Hume D.A."/>
            <person name="Kai C."/>
            <person name="Sasaki D."/>
            <person name="Tomaru Y."/>
            <person name="Fukuda S."/>
            <person name="Kanamori-Katayama M."/>
            <person name="Suzuki M."/>
            <person name="Aoki J."/>
            <person name="Arakawa T."/>
            <person name="Iida J."/>
            <person name="Imamura K."/>
            <person name="Itoh M."/>
            <person name="Kato T."/>
            <person name="Kawaji H."/>
            <person name="Kawagashira N."/>
            <person name="Kawashima T."/>
            <person name="Kojima M."/>
            <person name="Kondo S."/>
            <person name="Konno H."/>
            <person name="Nakano K."/>
            <person name="Ninomiya N."/>
            <person name="Nishio T."/>
            <person name="Okada M."/>
            <person name="Plessy C."/>
            <person name="Shibata K."/>
            <person name="Shiraki T."/>
            <person name="Suzuki S."/>
            <person name="Tagami M."/>
            <person name="Waki K."/>
            <person name="Watahiki A."/>
            <person name="Okamura-Oho Y."/>
            <person name="Suzuki H."/>
            <person name="Kawai J."/>
            <person name="Hayashizaki Y."/>
        </authorList>
    </citation>
    <scope>NUCLEOTIDE SEQUENCE [LARGE SCALE MRNA] (ISOFORM 3)</scope>
    <source>
        <strain>C57BL/6J</strain>
        <tissue>Corpora quadrigemina</tissue>
        <tissue>Hypothalamus</tissue>
    </source>
</reference>
<reference key="2">
    <citation type="journal article" date="2009" name="PLoS Biol.">
        <title>Lineage-specific biology revealed by a finished genome assembly of the mouse.</title>
        <authorList>
            <person name="Church D.M."/>
            <person name="Goodstadt L."/>
            <person name="Hillier L.W."/>
            <person name="Zody M.C."/>
            <person name="Goldstein S."/>
            <person name="She X."/>
            <person name="Bult C.J."/>
            <person name="Agarwala R."/>
            <person name="Cherry J.L."/>
            <person name="DiCuccio M."/>
            <person name="Hlavina W."/>
            <person name="Kapustin Y."/>
            <person name="Meric P."/>
            <person name="Maglott D."/>
            <person name="Birtle Z."/>
            <person name="Marques A.C."/>
            <person name="Graves T."/>
            <person name="Zhou S."/>
            <person name="Teague B."/>
            <person name="Potamousis K."/>
            <person name="Churas C."/>
            <person name="Place M."/>
            <person name="Herschleb J."/>
            <person name="Runnheim R."/>
            <person name="Forrest D."/>
            <person name="Amos-Landgraf J."/>
            <person name="Schwartz D.C."/>
            <person name="Cheng Z."/>
            <person name="Lindblad-Toh K."/>
            <person name="Eichler E.E."/>
            <person name="Ponting C.P."/>
        </authorList>
    </citation>
    <scope>NUCLEOTIDE SEQUENCE [LARGE SCALE GENOMIC DNA]</scope>
    <source>
        <strain>C57BL/6J</strain>
    </source>
</reference>
<reference key="3">
    <citation type="journal article" date="2010" name="Cell">
        <title>A tissue-specific atlas of mouse protein phosphorylation and expression.</title>
        <authorList>
            <person name="Huttlin E.L."/>
            <person name="Jedrychowski M.P."/>
            <person name="Elias J.E."/>
            <person name="Goswami T."/>
            <person name="Rad R."/>
            <person name="Beausoleil S.A."/>
            <person name="Villen J."/>
            <person name="Haas W."/>
            <person name="Sowa M.E."/>
            <person name="Gygi S.P."/>
        </authorList>
    </citation>
    <scope>IDENTIFICATION BY MASS SPECTROMETRY [LARGE SCALE ANALYSIS]</scope>
    <source>
        <tissue>Brain</tissue>
        <tissue>Brown adipose tissue</tissue>
        <tissue>Testis</tissue>
    </source>
</reference>
<proteinExistence type="evidence at protein level"/>
<comment type="alternative products">
    <event type="alternative splicing"/>
    <isoform>
        <id>Q8BYN5-1</id>
        <name>1</name>
        <sequence type="displayed"/>
    </isoform>
    <isoform>
        <id>Q8BYN5-2</id>
        <name>2</name>
        <sequence type="described" ref="VSP_039648"/>
    </isoform>
    <isoform>
        <id>Q8BYN5-3</id>
        <name>3</name>
        <sequence type="described" ref="VSP_039649 VSP_039650"/>
    </isoform>
</comment>
<comment type="miscellaneous">
    <molecule>Isoform 3</molecule>
    <text evidence="8">Due to intron retention.</text>
</comment>
<sequence length="507" mass="56886">MDSQKEALQRIISTLANKSDEIQNFIDTLNHTLKGVQENSSNILSELDEEFDSLYSILDDVKESMISTIKQEQVRKSQELQSQLSQCNNALENSEELLEFATRSLDIKEPEEFSKAARQIKDRVTMASAFRLSLKPKVSDNMTHLMVDFSQERQMLQTLKFLPVPKAPEIDPVECLVADNSVTVAWRMPEEDNKIDHFIMEYRKTNFDGLPRVKDERCWEVIDNIKGTEYTLSGLKFDSKYMNFRVRACNKAVAGDYSDPVTLETRALNFSLDNSSSHLNLKVEDSCVEWDPTGGKGQESKIKGKENKGSVHVTSLKKHTSGTPSPKRTSVGSRPPAVRGSRDRFTGESYTVLGDTAIENGQHYWEVKAQKDCKSYSVGVAYKTLGKFDQLGKTNTSWCVHVNSWLQNTFAAKHNNKVKALDVPVPEKIGVFCDFDGGQLSFYDAHSKQLLYSFKTKFTQPVVPGFMVWCGGLSLSTGMQVPSAVRTLQKSENGMTGSTSSLNNVTQ</sequence>
<gene>
    <name type="primary">Fsd1l</name>
    <name type="synonym">Ccdc10</name>
    <name type="synonym">Csdufd1</name>
    <name type="synonym">Fsd1nl</name>
</gene>
<dbReference type="EMBL" id="AK038893">
    <property type="protein sequence ID" value="BAC30161.1"/>
    <property type="molecule type" value="mRNA"/>
</dbReference>
<dbReference type="EMBL" id="AK140020">
    <property type="protein sequence ID" value="BAE24213.1"/>
    <property type="molecule type" value="mRNA"/>
</dbReference>
<dbReference type="EMBL" id="AL807745">
    <property type="status" value="NOT_ANNOTATED_CDS"/>
    <property type="molecule type" value="Genomic_DNA"/>
</dbReference>
<dbReference type="CCDS" id="CCDS57276.1">
    <molecule id="Q8BYN5-2"/>
</dbReference>
<dbReference type="RefSeq" id="NP_001182213.1">
    <molecule id="Q8BYN5-2"/>
    <property type="nucleotide sequence ID" value="NM_001195284.1"/>
</dbReference>
<dbReference type="RefSeq" id="NP_795940.1">
    <molecule id="Q8BYN5-3"/>
    <property type="nucleotide sequence ID" value="NM_176966.4"/>
</dbReference>
<dbReference type="FunCoup" id="Q8BYN5">
    <property type="interactions" value="27"/>
</dbReference>
<dbReference type="STRING" id="10090.ENSMUSP00000114931"/>
<dbReference type="iPTMnet" id="Q8BYN5"/>
<dbReference type="PhosphoSitePlus" id="Q8BYN5"/>
<dbReference type="SwissPalm" id="Q8BYN5"/>
<dbReference type="PaxDb" id="10090-ENSMUSP00000124002"/>
<dbReference type="ProteomicsDB" id="266868">
    <molecule id="Q8BYN5-1"/>
</dbReference>
<dbReference type="ProteomicsDB" id="266869">
    <molecule id="Q8BYN5-2"/>
</dbReference>
<dbReference type="ProteomicsDB" id="266870">
    <molecule id="Q8BYN5-3"/>
</dbReference>
<dbReference type="Antibodypedia" id="29292">
    <property type="antibodies" value="83 antibodies from 22 providers"/>
</dbReference>
<dbReference type="Ensembl" id="ENSMUST00000132151.8">
    <molecule id="Q8BYN5-2"/>
    <property type="protein sequence ID" value="ENSMUSP00000114931.2"/>
    <property type="gene ID" value="ENSMUSG00000054752.18"/>
</dbReference>
<dbReference type="GeneID" id="319636"/>
<dbReference type="KEGG" id="mmu:319636"/>
<dbReference type="UCSC" id="uc012deh.1">
    <molecule id="Q8BYN5-2"/>
    <property type="organism name" value="mouse"/>
</dbReference>
<dbReference type="AGR" id="MGI:2442443"/>
<dbReference type="CTD" id="83856"/>
<dbReference type="MGI" id="MGI:2442443">
    <property type="gene designation" value="Fsd1l"/>
</dbReference>
<dbReference type="VEuPathDB" id="HostDB:ENSMUSG00000054752"/>
<dbReference type="eggNOG" id="KOG2177">
    <property type="taxonomic scope" value="Eukaryota"/>
</dbReference>
<dbReference type="GeneTree" id="ENSGT00940000157979"/>
<dbReference type="HOGENOM" id="CLU_013137_19_1_1"/>
<dbReference type="InParanoid" id="Q8BYN5"/>
<dbReference type="PhylomeDB" id="Q8BYN5"/>
<dbReference type="TreeFam" id="TF333654"/>
<dbReference type="BioGRID-ORCS" id="319636">
    <property type="hits" value="0 hits in 73 CRISPR screens"/>
</dbReference>
<dbReference type="ChiTaRS" id="Fsd1l">
    <property type="organism name" value="mouse"/>
</dbReference>
<dbReference type="PRO" id="PR:Q8BYN5"/>
<dbReference type="Proteomes" id="UP000000589">
    <property type="component" value="Chromosome 4"/>
</dbReference>
<dbReference type="RNAct" id="Q8BYN5">
    <property type="molecule type" value="protein"/>
</dbReference>
<dbReference type="Bgee" id="ENSMUSG00000054752">
    <property type="expression patterns" value="Expressed in ventricular zone and 60 other cell types or tissues"/>
</dbReference>
<dbReference type="ExpressionAtlas" id="Q8BYN5">
    <property type="expression patterns" value="baseline and differential"/>
</dbReference>
<dbReference type="CDD" id="cd00063">
    <property type="entry name" value="FN3"/>
    <property type="match status" value="1"/>
</dbReference>
<dbReference type="CDD" id="cd12901">
    <property type="entry name" value="SPRY_PRY_FSD1"/>
    <property type="match status" value="1"/>
</dbReference>
<dbReference type="Gene3D" id="1.20.5.170">
    <property type="match status" value="1"/>
</dbReference>
<dbReference type="Gene3D" id="2.60.120.920">
    <property type="match status" value="1"/>
</dbReference>
<dbReference type="Gene3D" id="2.60.40.10">
    <property type="entry name" value="Immunoglobulins"/>
    <property type="match status" value="1"/>
</dbReference>
<dbReference type="InterPro" id="IPR001870">
    <property type="entry name" value="B30.2/SPRY"/>
</dbReference>
<dbReference type="InterPro" id="IPR043136">
    <property type="entry name" value="B30.2/SPRY_sf"/>
</dbReference>
<dbReference type="InterPro" id="IPR003649">
    <property type="entry name" value="Bbox_C"/>
</dbReference>
<dbReference type="InterPro" id="IPR003879">
    <property type="entry name" value="Butyrophylin_SPRY"/>
</dbReference>
<dbReference type="InterPro" id="IPR013320">
    <property type="entry name" value="ConA-like_dom_sf"/>
</dbReference>
<dbReference type="InterPro" id="IPR017903">
    <property type="entry name" value="COS_domain"/>
</dbReference>
<dbReference type="InterPro" id="IPR050617">
    <property type="entry name" value="E3_ligase_FN3/SPRY"/>
</dbReference>
<dbReference type="InterPro" id="IPR003961">
    <property type="entry name" value="FN3_dom"/>
</dbReference>
<dbReference type="InterPro" id="IPR036116">
    <property type="entry name" value="FN3_sf"/>
</dbReference>
<dbReference type="InterPro" id="IPR013783">
    <property type="entry name" value="Ig-like_fold"/>
</dbReference>
<dbReference type="InterPro" id="IPR035742">
    <property type="entry name" value="SPRY/PRY_FSD1"/>
</dbReference>
<dbReference type="InterPro" id="IPR003877">
    <property type="entry name" value="SPRY_dom"/>
</dbReference>
<dbReference type="PANTHER" id="PTHR24099">
    <property type="entry name" value="E3 UBIQUITIN-PROTEIN LIGASE TRIM36-RELATED"/>
    <property type="match status" value="1"/>
</dbReference>
<dbReference type="PANTHER" id="PTHR24099:SF8">
    <property type="entry name" value="FSD1-LIKE PROTEIN"/>
    <property type="match status" value="1"/>
</dbReference>
<dbReference type="Pfam" id="PF00041">
    <property type="entry name" value="fn3"/>
    <property type="match status" value="1"/>
</dbReference>
<dbReference type="Pfam" id="PF00622">
    <property type="entry name" value="SPRY"/>
    <property type="match status" value="1"/>
</dbReference>
<dbReference type="PRINTS" id="PR01407">
    <property type="entry name" value="BUTYPHLNCDUF"/>
</dbReference>
<dbReference type="SMART" id="SM00502">
    <property type="entry name" value="BBC"/>
    <property type="match status" value="1"/>
</dbReference>
<dbReference type="SMART" id="SM00060">
    <property type="entry name" value="FN3"/>
    <property type="match status" value="1"/>
</dbReference>
<dbReference type="SMART" id="SM00449">
    <property type="entry name" value="SPRY"/>
    <property type="match status" value="1"/>
</dbReference>
<dbReference type="SUPFAM" id="SSF49899">
    <property type="entry name" value="Concanavalin A-like lectins/glucanases"/>
    <property type="match status" value="1"/>
</dbReference>
<dbReference type="SUPFAM" id="SSF49265">
    <property type="entry name" value="Fibronectin type III"/>
    <property type="match status" value="1"/>
</dbReference>
<dbReference type="PROSITE" id="PS50188">
    <property type="entry name" value="B302_SPRY"/>
    <property type="match status" value="1"/>
</dbReference>
<dbReference type="PROSITE" id="PS51262">
    <property type="entry name" value="COS"/>
    <property type="match status" value="1"/>
</dbReference>
<dbReference type="PROSITE" id="PS50853">
    <property type="entry name" value="FN3"/>
    <property type="match status" value="1"/>
</dbReference>
<name>FSD1L_MOUSE</name>
<evidence type="ECO:0000250" key="1">
    <source>
        <dbReference type="UniProtKB" id="Q9BXM9"/>
    </source>
</evidence>
<evidence type="ECO:0000255" key="2"/>
<evidence type="ECO:0000255" key="3">
    <source>
        <dbReference type="PROSITE-ProRule" id="PRU00316"/>
    </source>
</evidence>
<evidence type="ECO:0000255" key="4">
    <source>
        <dbReference type="PROSITE-ProRule" id="PRU00548"/>
    </source>
</evidence>
<evidence type="ECO:0000255" key="5">
    <source>
        <dbReference type="PROSITE-ProRule" id="PRU00586"/>
    </source>
</evidence>
<evidence type="ECO:0000256" key="6">
    <source>
        <dbReference type="SAM" id="MobiDB-lite"/>
    </source>
</evidence>
<evidence type="ECO:0000303" key="7">
    <source>
    </source>
</evidence>
<evidence type="ECO:0000305" key="8"/>
<keyword id="KW-0025">Alternative splicing</keyword>
<keyword id="KW-0175">Coiled coil</keyword>
<keyword id="KW-0597">Phosphoprotein</keyword>
<keyword id="KW-1185">Reference proteome</keyword>
<feature type="chain" id="PRO_0000089406" description="FSD1-like protein">
    <location>
        <begin position="1"/>
        <end position="507"/>
    </location>
</feature>
<feature type="domain" description="COS" evidence="5">
    <location>
        <begin position="105"/>
        <end position="162"/>
    </location>
</feature>
<feature type="domain" description="Fibronectin type-III" evidence="3">
    <location>
        <begin position="164"/>
        <end position="268"/>
    </location>
</feature>
<feature type="domain" description="B30.2/SPRY" evidence="4">
    <location>
        <begin position="291"/>
        <end position="484"/>
    </location>
</feature>
<feature type="region of interest" description="Disordered" evidence="6">
    <location>
        <begin position="292"/>
        <end position="345"/>
    </location>
</feature>
<feature type="coiled-coil region" evidence="2">
    <location>
        <begin position="70"/>
        <end position="109"/>
    </location>
</feature>
<feature type="compositionally biased region" description="Basic and acidic residues" evidence="6">
    <location>
        <begin position="298"/>
        <end position="309"/>
    </location>
</feature>
<feature type="compositionally biased region" description="Polar residues" evidence="6">
    <location>
        <begin position="321"/>
        <end position="332"/>
    </location>
</feature>
<feature type="modified residue" description="Phosphoserine" evidence="1">
    <location>
        <position position="498"/>
    </location>
</feature>
<feature type="modified residue" description="Phosphoserine" evidence="1">
    <location>
        <position position="501"/>
    </location>
</feature>
<feature type="splice variant" id="VSP_039649" description="In isoform 3." evidence="7">
    <original>AARQIKDRVTMASAFR</original>
    <variation>VNKTKSKRTDKSKTQF</variation>
    <location>
        <begin position="116"/>
        <end position="131"/>
    </location>
</feature>
<feature type="splice variant" id="VSP_039650" description="In isoform 3." evidence="7">
    <location>
        <begin position="132"/>
        <end position="507"/>
    </location>
</feature>
<feature type="splice variant" id="VSP_039648" description="In isoform 2." evidence="8">
    <original>SVHVTSLKKHT</original>
    <variation>R</variation>
    <location>
        <begin position="310"/>
        <end position="320"/>
    </location>
</feature>
<organism>
    <name type="scientific">Mus musculus</name>
    <name type="common">Mouse</name>
    <dbReference type="NCBI Taxonomy" id="10090"/>
    <lineage>
        <taxon>Eukaryota</taxon>
        <taxon>Metazoa</taxon>
        <taxon>Chordata</taxon>
        <taxon>Craniata</taxon>
        <taxon>Vertebrata</taxon>
        <taxon>Euteleostomi</taxon>
        <taxon>Mammalia</taxon>
        <taxon>Eutheria</taxon>
        <taxon>Euarchontoglires</taxon>
        <taxon>Glires</taxon>
        <taxon>Rodentia</taxon>
        <taxon>Myomorpha</taxon>
        <taxon>Muroidea</taxon>
        <taxon>Muridae</taxon>
        <taxon>Murinae</taxon>
        <taxon>Mus</taxon>
        <taxon>Mus</taxon>
    </lineage>
</organism>
<accession>Q8BYN5</accession>
<accession>Q3USW7</accession>
<protein>
    <recommendedName>
        <fullName>FSD1-like protein</fullName>
    </recommendedName>
    <alternativeName>
        <fullName>Coiled-coil domain-containing protein 10</fullName>
    </alternativeName>
    <alternativeName>
        <fullName>FSD1 N-terminal-like protein</fullName>
    </alternativeName>
</protein>